<sequence>MLLKIAHLVGKHTIKFAQSVGIFSLFSFIAISSIIKPPLYLSLIIRQLLFIGFHSLPVVAMTTFFSGAVLALQSYTGFSRFSAENSIATVVVLSLTRELGPVLAGLIVAGRVGASIAAEIATMRVTEQVDALYTLSTDPIKYLVCPRVIAAIITMPCLVLIGDIIGVMGGYLVGIYKLDFNSTAYLTSTFQYLEPIDVISGLIKATVFGFIISIISCYSGYYSGKGAKGVGRATTSAVVNSSILILISNYLITELFFKV</sequence>
<organism>
    <name type="scientific">Rickettsia prowazekii (strain Madrid E)</name>
    <dbReference type="NCBI Taxonomy" id="272947"/>
    <lineage>
        <taxon>Bacteria</taxon>
        <taxon>Pseudomonadati</taxon>
        <taxon>Pseudomonadota</taxon>
        <taxon>Alphaproteobacteria</taxon>
        <taxon>Rickettsiales</taxon>
        <taxon>Rickettsiaceae</taxon>
        <taxon>Rickettsieae</taxon>
        <taxon>Rickettsia</taxon>
        <taxon>typhus group</taxon>
    </lineage>
</organism>
<dbReference type="EMBL" id="AJ235270">
    <property type="protein sequence ID" value="CAA14566.1"/>
    <property type="molecule type" value="Genomic_DNA"/>
</dbReference>
<dbReference type="PIR" id="G71718">
    <property type="entry name" value="G71718"/>
</dbReference>
<dbReference type="RefSeq" id="NP_220489.1">
    <property type="nucleotide sequence ID" value="NC_000963.1"/>
</dbReference>
<dbReference type="RefSeq" id="WP_004596488.1">
    <property type="nucleotide sequence ID" value="NC_000963.1"/>
</dbReference>
<dbReference type="SMR" id="Q9ZE51"/>
<dbReference type="STRING" id="272947.gene:17555179"/>
<dbReference type="EnsemblBacteria" id="CAA14566">
    <property type="protein sequence ID" value="CAA14566"/>
    <property type="gene ID" value="CAA14566"/>
</dbReference>
<dbReference type="KEGG" id="rpr:RP096"/>
<dbReference type="PATRIC" id="fig|272947.5.peg.96"/>
<dbReference type="eggNOG" id="COG0767">
    <property type="taxonomic scope" value="Bacteria"/>
</dbReference>
<dbReference type="HOGENOM" id="CLU_045686_1_1_5"/>
<dbReference type="OrthoDB" id="9806241at2"/>
<dbReference type="Proteomes" id="UP000002480">
    <property type="component" value="Chromosome"/>
</dbReference>
<dbReference type="GO" id="GO:0043190">
    <property type="term" value="C:ATP-binding cassette (ABC) transporter complex"/>
    <property type="evidence" value="ECO:0007669"/>
    <property type="project" value="InterPro"/>
</dbReference>
<dbReference type="GO" id="GO:0005548">
    <property type="term" value="F:phospholipid transporter activity"/>
    <property type="evidence" value="ECO:0007669"/>
    <property type="project" value="TreeGrafter"/>
</dbReference>
<dbReference type="InterPro" id="IPR003453">
    <property type="entry name" value="ABC_MlaE_roteobac"/>
</dbReference>
<dbReference type="InterPro" id="IPR030802">
    <property type="entry name" value="Permease_MalE"/>
</dbReference>
<dbReference type="NCBIfam" id="TIGR00056">
    <property type="entry name" value="MlaE family lipid ABC transporter permease subunit"/>
    <property type="match status" value="1"/>
</dbReference>
<dbReference type="PANTHER" id="PTHR30188">
    <property type="entry name" value="ABC TRANSPORTER PERMEASE PROTEIN-RELATED"/>
    <property type="match status" value="1"/>
</dbReference>
<dbReference type="PANTHER" id="PTHR30188:SF4">
    <property type="entry name" value="PROTEIN TRIGALACTOSYLDIACYLGLYCEROL 1, CHLOROPLASTIC"/>
    <property type="match status" value="1"/>
</dbReference>
<dbReference type="Pfam" id="PF02405">
    <property type="entry name" value="MlaE"/>
    <property type="match status" value="1"/>
</dbReference>
<reference key="1">
    <citation type="journal article" date="1998" name="Nature">
        <title>The genome sequence of Rickettsia prowazekii and the origin of mitochondria.</title>
        <authorList>
            <person name="Andersson S.G.E."/>
            <person name="Zomorodipour A."/>
            <person name="Andersson J.O."/>
            <person name="Sicheritz-Ponten T."/>
            <person name="Alsmark U.C.M."/>
            <person name="Podowski R.M."/>
            <person name="Naeslund A.K."/>
            <person name="Eriksson A.-S."/>
            <person name="Winkler H.H."/>
            <person name="Kurland C.G."/>
        </authorList>
    </citation>
    <scope>NUCLEOTIDE SEQUENCE [LARGE SCALE GENOMIC DNA]</scope>
    <source>
        <strain>Madrid E</strain>
    </source>
</reference>
<feature type="chain" id="PRO_0000272624" description="Probable ABC transporter permease protein RP096">
    <location>
        <begin position="1"/>
        <end position="259"/>
    </location>
</feature>
<feature type="transmembrane region" description="Helical" evidence="2">
    <location>
        <begin position="13"/>
        <end position="35"/>
    </location>
</feature>
<feature type="transmembrane region" description="Helical" evidence="2">
    <location>
        <begin position="49"/>
        <end position="69"/>
    </location>
</feature>
<feature type="transmembrane region" description="Helical" evidence="2">
    <location>
        <begin position="148"/>
        <end position="168"/>
    </location>
</feature>
<feature type="transmembrane region" description="Helical" evidence="2">
    <location>
        <begin position="195"/>
        <end position="215"/>
    </location>
</feature>
<feature type="transmembrane region" description="Helical" evidence="2">
    <location>
        <begin position="237"/>
        <end position="257"/>
    </location>
</feature>
<comment type="function">
    <text evidence="1">Could be part of an ABC transporter complex.</text>
</comment>
<comment type="subcellular location">
    <subcellularLocation>
        <location evidence="1">Cell inner membrane</location>
        <topology evidence="1">Multi-pass membrane protein</topology>
    </subcellularLocation>
</comment>
<comment type="similarity">
    <text evidence="3">Belongs to the MlaE permease family.</text>
</comment>
<proteinExistence type="inferred from homology"/>
<accession>Q9ZE51</accession>
<gene>
    <name type="ordered locus">RP096</name>
</gene>
<evidence type="ECO:0000250" key="1"/>
<evidence type="ECO:0000255" key="2"/>
<evidence type="ECO:0000305" key="3"/>
<name>Y096_RICPR</name>
<protein>
    <recommendedName>
        <fullName>Probable ABC transporter permease protein RP096</fullName>
    </recommendedName>
</protein>
<keyword id="KW-0997">Cell inner membrane</keyword>
<keyword id="KW-1003">Cell membrane</keyword>
<keyword id="KW-0472">Membrane</keyword>
<keyword id="KW-1185">Reference proteome</keyword>
<keyword id="KW-0812">Transmembrane</keyword>
<keyword id="KW-1133">Transmembrane helix</keyword>
<keyword id="KW-0813">Transport</keyword>